<organism>
    <name type="scientific">Chlamydia trachomatis serovar A (strain ATCC VR-571B / DSM 19440 / HAR-13)</name>
    <dbReference type="NCBI Taxonomy" id="315277"/>
    <lineage>
        <taxon>Bacteria</taxon>
        <taxon>Pseudomonadati</taxon>
        <taxon>Chlamydiota</taxon>
        <taxon>Chlamydiia</taxon>
        <taxon>Chlamydiales</taxon>
        <taxon>Chlamydiaceae</taxon>
        <taxon>Chlamydia/Chlamydophila group</taxon>
        <taxon>Chlamydia</taxon>
    </lineage>
</organism>
<dbReference type="EC" id="2.4.2.29" evidence="1"/>
<dbReference type="EMBL" id="CP000051">
    <property type="protein sequence ID" value="AAX50453.1"/>
    <property type="molecule type" value="Genomic_DNA"/>
</dbReference>
<dbReference type="RefSeq" id="WP_011324629.1">
    <property type="nucleotide sequence ID" value="NC_007429.1"/>
</dbReference>
<dbReference type="SMR" id="Q3KMG9"/>
<dbReference type="KEGG" id="cta:CTA_0211"/>
<dbReference type="HOGENOM" id="CLU_022060_0_2_0"/>
<dbReference type="UniPathway" id="UPA00392"/>
<dbReference type="Proteomes" id="UP000002532">
    <property type="component" value="Chromosome"/>
</dbReference>
<dbReference type="GO" id="GO:0046872">
    <property type="term" value="F:metal ion binding"/>
    <property type="evidence" value="ECO:0007669"/>
    <property type="project" value="UniProtKB-KW"/>
</dbReference>
<dbReference type="GO" id="GO:0008479">
    <property type="term" value="F:tRNA-guanosine(34) queuine transglycosylase activity"/>
    <property type="evidence" value="ECO:0007669"/>
    <property type="project" value="UniProtKB-UniRule"/>
</dbReference>
<dbReference type="GO" id="GO:0008616">
    <property type="term" value="P:queuosine biosynthetic process"/>
    <property type="evidence" value="ECO:0007669"/>
    <property type="project" value="UniProtKB-UniRule"/>
</dbReference>
<dbReference type="GO" id="GO:0101030">
    <property type="term" value="P:tRNA-guanine transglycosylation"/>
    <property type="evidence" value="ECO:0007669"/>
    <property type="project" value="InterPro"/>
</dbReference>
<dbReference type="Gene3D" id="3.20.20.105">
    <property type="entry name" value="Queuine tRNA-ribosyltransferase-like"/>
    <property type="match status" value="1"/>
</dbReference>
<dbReference type="HAMAP" id="MF_00168">
    <property type="entry name" value="Q_tRNA_Tgt"/>
    <property type="match status" value="1"/>
</dbReference>
<dbReference type="InterPro" id="IPR004803">
    <property type="entry name" value="TGT"/>
</dbReference>
<dbReference type="InterPro" id="IPR036511">
    <property type="entry name" value="TGT-like_sf"/>
</dbReference>
<dbReference type="InterPro" id="IPR002616">
    <property type="entry name" value="tRNA_ribo_trans-like"/>
</dbReference>
<dbReference type="NCBIfam" id="TIGR00430">
    <property type="entry name" value="Q_tRNA_tgt"/>
    <property type="match status" value="1"/>
</dbReference>
<dbReference type="NCBIfam" id="TIGR00449">
    <property type="entry name" value="tgt_general"/>
    <property type="match status" value="1"/>
</dbReference>
<dbReference type="PANTHER" id="PTHR43468">
    <property type="match status" value="1"/>
</dbReference>
<dbReference type="PANTHER" id="PTHR43468:SF1">
    <property type="entry name" value="TRNA-GUANOSINE(34) QUEUINE TRANSGLYCOSYLASE"/>
    <property type="match status" value="1"/>
</dbReference>
<dbReference type="Pfam" id="PF01702">
    <property type="entry name" value="TGT"/>
    <property type="match status" value="1"/>
</dbReference>
<dbReference type="SUPFAM" id="SSF51713">
    <property type="entry name" value="tRNA-guanine transglycosylase"/>
    <property type="match status" value="1"/>
</dbReference>
<feature type="chain" id="PRO_1000016775" description="Queuine tRNA-ribosyltransferase">
    <location>
        <begin position="1"/>
        <end position="372"/>
    </location>
</feature>
<feature type="region of interest" description="RNA binding" evidence="1">
    <location>
        <begin position="262"/>
        <end position="268"/>
    </location>
</feature>
<feature type="region of interest" description="RNA binding; important for wobble base 34 recognition" evidence="1">
    <location>
        <begin position="286"/>
        <end position="290"/>
    </location>
</feature>
<feature type="active site" description="Proton acceptor" evidence="1">
    <location>
        <position position="89"/>
    </location>
</feature>
<feature type="active site" description="Nucleophile" evidence="1">
    <location>
        <position position="281"/>
    </location>
</feature>
<feature type="binding site" evidence="1">
    <location>
        <begin position="89"/>
        <end position="93"/>
    </location>
    <ligand>
        <name>substrate</name>
    </ligand>
</feature>
<feature type="binding site" evidence="1">
    <location>
        <position position="161"/>
    </location>
    <ligand>
        <name>substrate</name>
    </ligand>
</feature>
<feature type="binding site" evidence="1">
    <location>
        <position position="232"/>
    </location>
    <ligand>
        <name>substrate</name>
    </ligand>
</feature>
<feature type="binding site" evidence="1">
    <location>
        <position position="319"/>
    </location>
    <ligand>
        <name>Zn(2+)</name>
        <dbReference type="ChEBI" id="CHEBI:29105"/>
    </ligand>
</feature>
<feature type="binding site" evidence="1">
    <location>
        <position position="321"/>
    </location>
    <ligand>
        <name>Zn(2+)</name>
        <dbReference type="ChEBI" id="CHEBI:29105"/>
    </ligand>
</feature>
<feature type="binding site" evidence="1">
    <location>
        <position position="324"/>
    </location>
    <ligand>
        <name>Zn(2+)</name>
        <dbReference type="ChEBI" id="CHEBI:29105"/>
    </ligand>
</feature>
<feature type="binding site" evidence="1">
    <location>
        <position position="351"/>
    </location>
    <ligand>
        <name>Zn(2+)</name>
        <dbReference type="ChEBI" id="CHEBI:29105"/>
    </ligand>
</feature>
<evidence type="ECO:0000255" key="1">
    <source>
        <dbReference type="HAMAP-Rule" id="MF_00168"/>
    </source>
</evidence>
<sequence length="372" mass="40932">MALRFEILHQSKKSRARVGRIETAHGYIDTPAFVPVATNGALKGVLDHSNIPLMFCNTYHLIVHPGAEAIAAMGGLHQFIGRNAPIITDSGGFQIFSLAYGSVAEEIKSCGKKKGGNTIIKVNDDGVHFKSYRDGRKLFLSPEISVQAQKDLGADIILPLDELLPFHADPTYFHQSSQRTYVWEKRSLDYHLKNPGIQSMYGVIHGGTFPDQRKLGCKFVEDLPFDGSAIGGSLGKNLQDIVEVVGVTAANLSAERPRHLLGIGDLPSIWATVGFGIDSFDSSYPTKAARHGMILTLQGPLKINNQRYSSDLNPIEPGCSCLACSQGITRAYLRHLFKVHEPNAGIWASIHNMHHMQKVMREIREGILNDRI</sequence>
<reference key="1">
    <citation type="journal article" date="2005" name="Infect. Immun.">
        <title>Comparative genomic analysis of Chlamydia trachomatis oculotropic and genitotropic strains.</title>
        <authorList>
            <person name="Carlson J.H."/>
            <person name="Porcella S.F."/>
            <person name="McClarty G."/>
            <person name="Caldwell H.D."/>
        </authorList>
    </citation>
    <scope>NUCLEOTIDE SEQUENCE [LARGE SCALE GENOMIC DNA]</scope>
    <source>
        <strain>ATCC VR-571B / DSM 19440 / HAR-13</strain>
    </source>
</reference>
<gene>
    <name evidence="1" type="primary">tgt</name>
    <name type="ordered locus">CTA_0211</name>
</gene>
<name>TGT_CHLTA</name>
<keyword id="KW-0328">Glycosyltransferase</keyword>
<keyword id="KW-0479">Metal-binding</keyword>
<keyword id="KW-0671">Queuosine biosynthesis</keyword>
<keyword id="KW-0808">Transferase</keyword>
<keyword id="KW-0819">tRNA processing</keyword>
<keyword id="KW-0862">Zinc</keyword>
<proteinExistence type="inferred from homology"/>
<protein>
    <recommendedName>
        <fullName evidence="1">Queuine tRNA-ribosyltransferase</fullName>
        <ecNumber evidence="1">2.4.2.29</ecNumber>
    </recommendedName>
    <alternativeName>
        <fullName evidence="1">Guanine insertion enzyme</fullName>
    </alternativeName>
    <alternativeName>
        <fullName evidence="1">tRNA-guanine transglycosylase</fullName>
    </alternativeName>
</protein>
<comment type="function">
    <text evidence="1">Catalyzes the base-exchange of a guanine (G) residue with the queuine precursor 7-aminomethyl-7-deazaguanine (PreQ1) at position 34 (anticodon wobble position) in tRNAs with GU(N) anticodons (tRNA-Asp, -Asn, -His and -Tyr). Catalysis occurs through a double-displacement mechanism. The nucleophile active site attacks the C1' of nucleotide 34 to detach the guanine base from the RNA, forming a covalent enzyme-RNA intermediate. The proton acceptor active site deprotonates the incoming PreQ1, allowing a nucleophilic attack on the C1' of the ribose to form the product. After dissociation, two additional enzymatic reactions on the tRNA convert PreQ1 to queuine (Q), resulting in the hypermodified nucleoside queuosine (7-(((4,5-cis-dihydroxy-2-cyclopenten-1-yl)amino)methyl)-7-deazaguanosine).</text>
</comment>
<comment type="catalytic activity">
    <reaction evidence="1">
        <text>7-aminomethyl-7-carbaguanine + guanosine(34) in tRNA = 7-aminomethyl-7-carbaguanosine(34) in tRNA + guanine</text>
        <dbReference type="Rhea" id="RHEA:24104"/>
        <dbReference type="Rhea" id="RHEA-COMP:10341"/>
        <dbReference type="Rhea" id="RHEA-COMP:10342"/>
        <dbReference type="ChEBI" id="CHEBI:16235"/>
        <dbReference type="ChEBI" id="CHEBI:58703"/>
        <dbReference type="ChEBI" id="CHEBI:74269"/>
        <dbReference type="ChEBI" id="CHEBI:82833"/>
        <dbReference type="EC" id="2.4.2.29"/>
    </reaction>
</comment>
<comment type="cofactor">
    <cofactor evidence="1">
        <name>Zn(2+)</name>
        <dbReference type="ChEBI" id="CHEBI:29105"/>
    </cofactor>
    <text evidence="1">Binds 1 zinc ion per subunit.</text>
</comment>
<comment type="pathway">
    <text evidence="1">tRNA modification; tRNA-queuosine biosynthesis.</text>
</comment>
<comment type="subunit">
    <text evidence="1">Homodimer. Within each dimer, one monomer is responsible for RNA recognition and catalysis, while the other monomer binds to the replacement base PreQ1.</text>
</comment>
<comment type="similarity">
    <text evidence="1">Belongs to the queuine tRNA-ribosyltransferase family.</text>
</comment>
<accession>Q3KMG9</accession>